<organism>
    <name type="scientific">Arabidopsis thaliana</name>
    <name type="common">Mouse-ear cress</name>
    <dbReference type="NCBI Taxonomy" id="3702"/>
    <lineage>
        <taxon>Eukaryota</taxon>
        <taxon>Viridiplantae</taxon>
        <taxon>Streptophyta</taxon>
        <taxon>Embryophyta</taxon>
        <taxon>Tracheophyta</taxon>
        <taxon>Spermatophyta</taxon>
        <taxon>Magnoliopsida</taxon>
        <taxon>eudicotyledons</taxon>
        <taxon>Gunneridae</taxon>
        <taxon>Pentapetalae</taxon>
        <taxon>rosids</taxon>
        <taxon>malvids</taxon>
        <taxon>Brassicales</taxon>
        <taxon>Brassicaceae</taxon>
        <taxon>Camelineae</taxon>
        <taxon>Arabidopsis</taxon>
    </lineage>
</organism>
<gene>
    <name evidence="8" type="primary">AHL29</name>
    <name evidence="9" type="synonym">SOB3</name>
    <name evidence="11" type="ordered locus">At1g76500</name>
    <name evidence="12" type="ORF">F14G6.10</name>
</gene>
<accession>Q9C9K7</accession>
<evidence type="ECO:0000250" key="1">
    <source>
        <dbReference type="UniProtKB" id="Q8VYJ2"/>
    </source>
</evidence>
<evidence type="ECO:0000255" key="2"/>
<evidence type="ECO:0000255" key="3">
    <source>
        <dbReference type="PROSITE-ProRule" id="PRU01078"/>
    </source>
</evidence>
<evidence type="ECO:0000256" key="4">
    <source>
        <dbReference type="SAM" id="MobiDB-lite"/>
    </source>
</evidence>
<evidence type="ECO:0000269" key="5">
    <source>
    </source>
</evidence>
<evidence type="ECO:0000269" key="6">
    <source>
    </source>
</evidence>
<evidence type="ECO:0000269" key="7">
    <source>
    </source>
</evidence>
<evidence type="ECO:0000303" key="8">
    <source>
    </source>
</evidence>
<evidence type="ECO:0000303" key="9">
    <source>
    </source>
</evidence>
<evidence type="ECO:0000305" key="10"/>
<evidence type="ECO:0000312" key="11">
    <source>
        <dbReference type="Araport" id="AT1G76500"/>
    </source>
</evidence>
<evidence type="ECO:0000312" key="12">
    <source>
        <dbReference type="EMBL" id="AAG51949.1"/>
    </source>
</evidence>
<evidence type="ECO:0000312" key="13">
    <source>
        <dbReference type="EMBL" id="AEE35850.1"/>
    </source>
</evidence>
<name>AHL29_ARATH</name>
<proteinExistence type="evidence at protein level"/>
<protein>
    <recommendedName>
        <fullName evidence="13">AT-hook motif nuclear-localized protein 29</fullName>
    </recommendedName>
    <alternativeName>
        <fullName evidence="9">Protein SUPPRESSOR OF PHYB-4#3</fullName>
    </alternativeName>
</protein>
<keyword id="KW-0238">DNA-binding</keyword>
<keyword id="KW-0287">Flowering</keyword>
<keyword id="KW-0539">Nucleus</keyword>
<keyword id="KW-1185">Reference proteome</keyword>
<keyword id="KW-0804">Transcription</keyword>
<keyword id="KW-0805">Transcription regulation</keyword>
<reference key="1">
    <citation type="journal article" date="2000" name="Nature">
        <title>Sequence and analysis of chromosome 1 of the plant Arabidopsis thaliana.</title>
        <authorList>
            <person name="Theologis A."/>
            <person name="Ecker J.R."/>
            <person name="Palm C.J."/>
            <person name="Federspiel N.A."/>
            <person name="Kaul S."/>
            <person name="White O."/>
            <person name="Alonso J."/>
            <person name="Altafi H."/>
            <person name="Araujo R."/>
            <person name="Bowman C.L."/>
            <person name="Brooks S.Y."/>
            <person name="Buehler E."/>
            <person name="Chan A."/>
            <person name="Chao Q."/>
            <person name="Chen H."/>
            <person name="Cheuk R.F."/>
            <person name="Chin C.W."/>
            <person name="Chung M.K."/>
            <person name="Conn L."/>
            <person name="Conway A.B."/>
            <person name="Conway A.R."/>
            <person name="Creasy T.H."/>
            <person name="Dewar K."/>
            <person name="Dunn P."/>
            <person name="Etgu P."/>
            <person name="Feldblyum T.V."/>
            <person name="Feng J.-D."/>
            <person name="Fong B."/>
            <person name="Fujii C.Y."/>
            <person name="Gill J.E."/>
            <person name="Goldsmith A.D."/>
            <person name="Haas B."/>
            <person name="Hansen N.F."/>
            <person name="Hughes B."/>
            <person name="Huizar L."/>
            <person name="Hunter J.L."/>
            <person name="Jenkins J."/>
            <person name="Johnson-Hopson C."/>
            <person name="Khan S."/>
            <person name="Khaykin E."/>
            <person name="Kim C.J."/>
            <person name="Koo H.L."/>
            <person name="Kremenetskaia I."/>
            <person name="Kurtz D.B."/>
            <person name="Kwan A."/>
            <person name="Lam B."/>
            <person name="Langin-Hooper S."/>
            <person name="Lee A."/>
            <person name="Lee J.M."/>
            <person name="Lenz C.A."/>
            <person name="Li J.H."/>
            <person name="Li Y.-P."/>
            <person name="Lin X."/>
            <person name="Liu S.X."/>
            <person name="Liu Z.A."/>
            <person name="Luros J.S."/>
            <person name="Maiti R."/>
            <person name="Marziali A."/>
            <person name="Militscher J."/>
            <person name="Miranda M."/>
            <person name="Nguyen M."/>
            <person name="Nierman W.C."/>
            <person name="Osborne B.I."/>
            <person name="Pai G."/>
            <person name="Peterson J."/>
            <person name="Pham P.K."/>
            <person name="Rizzo M."/>
            <person name="Rooney T."/>
            <person name="Rowley D."/>
            <person name="Sakano H."/>
            <person name="Salzberg S.L."/>
            <person name="Schwartz J.R."/>
            <person name="Shinn P."/>
            <person name="Southwick A.M."/>
            <person name="Sun H."/>
            <person name="Tallon L.J."/>
            <person name="Tambunga G."/>
            <person name="Toriumi M.J."/>
            <person name="Town C.D."/>
            <person name="Utterback T."/>
            <person name="Van Aken S."/>
            <person name="Vaysberg M."/>
            <person name="Vysotskaia V.S."/>
            <person name="Walker M."/>
            <person name="Wu D."/>
            <person name="Yu G."/>
            <person name="Fraser C.M."/>
            <person name="Venter J.C."/>
            <person name="Davis R.W."/>
        </authorList>
    </citation>
    <scope>NUCLEOTIDE SEQUENCE [LARGE SCALE GENOMIC DNA]</scope>
    <source>
        <strain>cv. Columbia</strain>
    </source>
</reference>
<reference key="2">
    <citation type="journal article" date="2017" name="Plant J.">
        <title>Araport11: a complete reannotation of the Arabidopsis thaliana reference genome.</title>
        <authorList>
            <person name="Cheng C.Y."/>
            <person name="Krishnakumar V."/>
            <person name="Chan A.P."/>
            <person name="Thibaud-Nissen F."/>
            <person name="Schobel S."/>
            <person name="Town C.D."/>
        </authorList>
    </citation>
    <scope>GENOME REANNOTATION</scope>
    <source>
        <strain>cv. Columbia</strain>
    </source>
</reference>
<reference key="3">
    <citation type="journal article" date="2004" name="Genome Res.">
        <title>Whole genome sequence comparisons and 'full-length' cDNA sequences: a combined approach to evaluate and improve Arabidopsis genome annotation.</title>
        <authorList>
            <person name="Castelli V."/>
            <person name="Aury J.-M."/>
            <person name="Jaillon O."/>
            <person name="Wincker P."/>
            <person name="Clepet C."/>
            <person name="Menard M."/>
            <person name="Cruaud C."/>
            <person name="Quetier F."/>
            <person name="Scarpelli C."/>
            <person name="Schaechter V."/>
            <person name="Temple G."/>
            <person name="Caboche M."/>
            <person name="Weissenbach J."/>
            <person name="Salanoubat M."/>
        </authorList>
    </citation>
    <scope>NUCLEOTIDE SEQUENCE [LARGE SCALE MRNA]</scope>
    <source>
        <strain>cv. Columbia</strain>
    </source>
</reference>
<reference key="4">
    <citation type="journal article" date="2004" name="Plant Mol. Biol.">
        <title>Identification of a novel plant MAR DNA binding protein localized on chromosomal surfaces.</title>
        <authorList>
            <person name="Fujimoto S."/>
            <person name="Matsunaga S."/>
            <person name="Yonemura M."/>
            <person name="Uchiyama S."/>
            <person name="Azuma T."/>
            <person name="Fukui K."/>
        </authorList>
    </citation>
    <scope>IDENTIFICATION</scope>
    <scope>GENE FAMILY</scope>
    <scope>NOMENCLATURE</scope>
    <source>
        <strain>cv. Columbia</strain>
    </source>
</reference>
<reference key="5">
    <citation type="journal article" date="2008" name="Plant J.">
        <title>The AT-hook-containing proteins SOB3/AHL29 and ESC/AHL27 are negative modulators of hypocotyl growth in Arabidopsis.</title>
        <authorList>
            <person name="Street I.H."/>
            <person name="Shah P.K."/>
            <person name="Smith A.M."/>
            <person name="Avery N."/>
            <person name="Neff M.M."/>
        </authorList>
    </citation>
    <scope>FUNCTION</scope>
    <scope>TISSUE SPECIFICITY</scope>
    <scope>SUBCELLULAR LOCATION</scope>
    <scope>DISRUPTION PHENOTYPE</scope>
    <scope>MUTAGENESIS OF ARG-77</scope>
</reference>
<reference key="6">
    <citation type="journal article" date="2009" name="Plant Mol. Biol.">
        <title>Over-expression of an AT-hook gene, AHL22, delays flowering and inhibits the elongation of the hypocotyl in Arabidopsis thaliana.</title>
        <authorList>
            <person name="Xiao C."/>
            <person name="Chen F."/>
            <person name="Yu X."/>
            <person name="Lin C."/>
            <person name="Fu Y.F."/>
        </authorList>
    </citation>
    <scope>FUNCTION</scope>
</reference>
<reference key="7">
    <citation type="journal article" date="2013" name="Proc. Natl. Acad. Sci. U.S.A.">
        <title>Arabidopsis thaliana AHL family modulates hypocotyl growth redundantly by interacting with each other via the PPC/DUF296 domain.</title>
        <authorList>
            <person name="Zhao J."/>
            <person name="Favero D.S."/>
            <person name="Peng H."/>
            <person name="Neff M.M."/>
        </authorList>
    </citation>
    <scope>GENE FAMILY</scope>
    <scope>MUTAGENESIS OF ARG-77</scope>
    <scope>SUBUNIT</scope>
    <scope>INTERACTION WITH AHL5; AHL12; AHL25; AHL27; TCP4; TCP13 AND EF114</scope>
    <scope>SUBCELLULAR LOCATION</scope>
    <scope>DOMAIN PPC</scope>
</reference>
<feature type="chain" id="PRO_0000432046" description="AT-hook motif nuclear-localized protein 29">
    <location>
        <begin position="1"/>
        <end position="302"/>
    </location>
</feature>
<feature type="domain" description="PPC" evidence="3">
    <location>
        <begin position="96"/>
        <end position="241"/>
    </location>
</feature>
<feature type="DNA-binding region" description="A.T hook" evidence="2">
    <location>
        <begin position="72"/>
        <end position="84"/>
    </location>
</feature>
<feature type="region of interest" description="Disordered" evidence="4">
    <location>
        <begin position="1"/>
        <end position="95"/>
    </location>
</feature>
<feature type="region of interest" description="Required for the binding to non-AHL interactors" evidence="7">
    <location>
        <begin position="164"/>
        <end position="169"/>
    </location>
</feature>
<feature type="region of interest" description="Disordered" evidence="4">
    <location>
        <begin position="229"/>
        <end position="279"/>
    </location>
</feature>
<feature type="compositionally biased region" description="Pro residues" evidence="4">
    <location>
        <begin position="32"/>
        <end position="44"/>
    </location>
</feature>
<feature type="compositionally biased region" description="Gly residues" evidence="4">
    <location>
        <begin position="237"/>
        <end position="251"/>
    </location>
</feature>
<feature type="mutagenesis site" description="In sob3-6; Abolishes binding to AT-rich DNA; Exhibits a long hypocotyl phenotype in the light." evidence="5 7">
    <original>R</original>
    <variation>H</variation>
    <location>
        <position position="77"/>
    </location>
</feature>
<feature type="sequence conflict" description="In Ref. 3; BX817317." evidence="10" ref="3">
    <original>SGADI</original>
    <variation>TGADK</variation>
    <location>
        <begin position="108"/>
        <end position="112"/>
    </location>
</feature>
<feature type="sequence conflict" description="In Ref. 3; BX817317." evidence="10" ref="3">
    <original>I</original>
    <variation>F</variation>
    <location>
        <position position="189"/>
    </location>
</feature>
<sequence length="302" mass="30615">MDGGYDQSGGASRYFHNLFRPELHHQLQPQPQLHPLPQPQPQPQPQQQNSDDESDSNKDPGSDPVTSGSTGKRPRGRPPGSKNKPKPPVIVTRDSPNVLRSHVLEVSSGADIVESVTTYARRRGRGVSILSGNGTVANVSLRQPATTAAHGANGGTGGVVALHGRFEILSLTGTVLPPPAPPGSGGLSIFLSGVQGQVIGGNVVAPLVASGPVILMAASFSNATFERLPLEDEGGEGGEGGEVGEGGGGEGGPPPATSSSPPSGAGQGQLRGNMSGYDQFAGDPHLLGWGAAAAAAPPRPAF</sequence>
<comment type="function">
    <text evidence="1 5 6">Transcription factor that specifically binds AT-rich DNA sequences related to the nuclear matrix attachment regions (MARs) (By similarity). Acts redundantly with AHL18, AHL22 and AHL27 in the regulation of flowering and regulation of the hypocotyl elongation (PubMed:19517252). Acts redundantly with AHL27/ESC to modulate hypocotyl growth inhibition in response to light (PubMed:18088311).</text>
</comment>
<comment type="subunit">
    <text evidence="7">Homodimer. Interacts with AHL5, AHL12, AHL25, AHL27, TCP4, TCP13 and EF114.</text>
</comment>
<comment type="subcellular location">
    <subcellularLocation>
        <location evidence="5 7">Nucleus</location>
    </subcellularLocation>
</comment>
<comment type="tissue specificity">
    <text evidence="5">Expressed in the hypocotyl and the vascular tissue of seedling.</text>
</comment>
<comment type="domain">
    <text evidence="7">The PPC domain mediates interactions between AHL proteins.</text>
</comment>
<comment type="disruption phenotype">
    <text evidence="5">AHL27 and AHL29 double mutant exhibit a long hypocotyl phenotype in the light.</text>
</comment>
<comment type="miscellaneous">
    <text evidence="5">Overexpression of AHL29 results in altered cell expansion dynamics and delayed senescence.</text>
</comment>
<dbReference type="EMBL" id="AC015450">
    <property type="protein sequence ID" value="AAG51949.1"/>
    <property type="molecule type" value="Genomic_DNA"/>
</dbReference>
<dbReference type="EMBL" id="CP002684">
    <property type="protein sequence ID" value="AEE35850.1"/>
    <property type="molecule type" value="Genomic_DNA"/>
</dbReference>
<dbReference type="EMBL" id="BX817317">
    <property type="status" value="NOT_ANNOTATED_CDS"/>
    <property type="molecule type" value="mRNA"/>
</dbReference>
<dbReference type="EMBL" id="BR000365">
    <property type="protein sequence ID" value="FAA00300.1"/>
    <property type="molecule type" value="mRNA"/>
</dbReference>
<dbReference type="PIR" id="H96792">
    <property type="entry name" value="H96792"/>
</dbReference>
<dbReference type="RefSeq" id="NP_177776.1">
    <property type="nucleotide sequence ID" value="NM_106300.4"/>
</dbReference>
<dbReference type="SMR" id="Q9C9K7"/>
<dbReference type="FunCoup" id="Q9C9K7">
    <property type="interactions" value="103"/>
</dbReference>
<dbReference type="STRING" id="3702.Q9C9K7"/>
<dbReference type="PaxDb" id="3702-AT1G76500.1"/>
<dbReference type="ProteomicsDB" id="244847"/>
<dbReference type="EnsemblPlants" id="AT1G76500.1">
    <property type="protein sequence ID" value="AT1G76500.1"/>
    <property type="gene ID" value="AT1G76500"/>
</dbReference>
<dbReference type="GeneID" id="843983"/>
<dbReference type="Gramene" id="AT1G76500.1">
    <property type="protein sequence ID" value="AT1G76500.1"/>
    <property type="gene ID" value="AT1G76500"/>
</dbReference>
<dbReference type="KEGG" id="ath:AT1G76500"/>
<dbReference type="Araport" id="AT1G76500"/>
<dbReference type="TAIR" id="AT1G76500">
    <property type="gene designation" value="AHL29"/>
</dbReference>
<dbReference type="eggNOG" id="ENOG502QV94">
    <property type="taxonomic scope" value="Eukaryota"/>
</dbReference>
<dbReference type="HOGENOM" id="CLU_039808_2_2_1"/>
<dbReference type="InParanoid" id="Q9C9K7"/>
<dbReference type="OMA" id="GQLRGNM"/>
<dbReference type="PhylomeDB" id="Q9C9K7"/>
<dbReference type="PRO" id="PR:Q9C9K7"/>
<dbReference type="Proteomes" id="UP000006548">
    <property type="component" value="Chromosome 1"/>
</dbReference>
<dbReference type="ExpressionAtlas" id="Q9C9K7">
    <property type="expression patterns" value="baseline and differential"/>
</dbReference>
<dbReference type="GO" id="GO:0005634">
    <property type="term" value="C:nucleus"/>
    <property type="evidence" value="ECO:0000314"/>
    <property type="project" value="UniProtKB"/>
</dbReference>
<dbReference type="GO" id="GO:0003680">
    <property type="term" value="F:minor groove of adenine-thymine-rich DNA binding"/>
    <property type="evidence" value="ECO:0000314"/>
    <property type="project" value="UniProtKB"/>
</dbReference>
<dbReference type="GO" id="GO:0009908">
    <property type="term" value="P:flower development"/>
    <property type="evidence" value="ECO:0007669"/>
    <property type="project" value="UniProtKB-KW"/>
</dbReference>
<dbReference type="GO" id="GO:0009640">
    <property type="term" value="P:photomorphogenesis"/>
    <property type="evidence" value="ECO:0000315"/>
    <property type="project" value="TAIR"/>
</dbReference>
<dbReference type="GO" id="GO:0010228">
    <property type="term" value="P:vegetative to reproductive phase transition of meristem"/>
    <property type="evidence" value="ECO:0000315"/>
    <property type="project" value="UniProtKB"/>
</dbReference>
<dbReference type="CDD" id="cd11378">
    <property type="entry name" value="DUF296"/>
    <property type="match status" value="1"/>
</dbReference>
<dbReference type="FunFam" id="3.30.1330.80:FF:000002">
    <property type="entry name" value="AT-hook motif nuclear-localized protein"/>
    <property type="match status" value="1"/>
</dbReference>
<dbReference type="Gene3D" id="3.30.1330.80">
    <property type="entry name" value="Hypothetical protein, similar to alpha- acetolactate decarboxylase, domain 2"/>
    <property type="match status" value="1"/>
</dbReference>
<dbReference type="InterPro" id="IPR014476">
    <property type="entry name" value="AHL15-29"/>
</dbReference>
<dbReference type="InterPro" id="IPR005175">
    <property type="entry name" value="PPC_dom"/>
</dbReference>
<dbReference type="PANTHER" id="PTHR31100">
    <property type="entry name" value="AT-HOOK MOTIF NUCLEAR-LOCALIZED PROTEIN 15"/>
    <property type="match status" value="1"/>
</dbReference>
<dbReference type="PANTHER" id="PTHR31100:SF51">
    <property type="entry name" value="AT-HOOK MOTIF NUCLEAR-LOCALIZED PROTEIN 29"/>
    <property type="match status" value="1"/>
</dbReference>
<dbReference type="Pfam" id="PF03479">
    <property type="entry name" value="PCC"/>
    <property type="match status" value="1"/>
</dbReference>
<dbReference type="PIRSF" id="PIRSF016021">
    <property type="entry name" value="ESCAROLA"/>
    <property type="match status" value="1"/>
</dbReference>
<dbReference type="SUPFAM" id="SSF117856">
    <property type="entry name" value="AF0104/ALDC/Ptd012-like"/>
    <property type="match status" value="1"/>
</dbReference>
<dbReference type="PROSITE" id="PS51742">
    <property type="entry name" value="PPC"/>
    <property type="match status" value="1"/>
</dbReference>